<protein>
    <recommendedName>
        <fullName evidence="1">UvrABC system protein A</fullName>
        <shortName evidence="1">UvrA protein</shortName>
    </recommendedName>
    <alternativeName>
        <fullName evidence="1">Excinuclease ABC subunit A</fullName>
    </alternativeName>
</protein>
<gene>
    <name evidence="1" type="primary">uvrA</name>
    <name type="ordered locus">MYPU_7100</name>
</gene>
<evidence type="ECO:0000255" key="1">
    <source>
        <dbReference type="HAMAP-Rule" id="MF_00205"/>
    </source>
</evidence>
<name>UVRA_MYCPU</name>
<comment type="function">
    <text evidence="1">The UvrABC repair system catalyzes the recognition and processing of DNA lesions. UvrA is an ATPase and a DNA-binding protein. A damage recognition complex composed of 2 UvrA and 2 UvrB subunits scans DNA for abnormalities. When the presence of a lesion has been verified by UvrB, the UvrA molecules dissociate.</text>
</comment>
<comment type="subunit">
    <text evidence="1">Forms a heterotetramer with UvrB during the search for lesions.</text>
</comment>
<comment type="subcellular location">
    <subcellularLocation>
        <location evidence="1">Cytoplasm</location>
    </subcellularLocation>
</comment>
<comment type="similarity">
    <text evidence="1">Belongs to the ABC transporter superfamily. UvrA family.</text>
</comment>
<proteinExistence type="inferred from homology"/>
<feature type="chain" id="PRO_0000093067" description="UvrABC system protein A">
    <location>
        <begin position="1"/>
        <end position="944"/>
    </location>
</feature>
<feature type="domain" description="ABC transporter 1" evidence="1">
    <location>
        <begin position="1"/>
        <end position="242"/>
    </location>
</feature>
<feature type="domain" description="ABC transporter 2" evidence="1">
    <location>
        <begin position="359"/>
        <end position="597"/>
    </location>
</feature>
<feature type="domain" description="ABC transporter 3">
    <location>
        <begin position="610"/>
        <end position="935"/>
    </location>
</feature>
<feature type="zinc finger region" description="C4-type; degenerate" evidence="1">
    <location>
        <begin position="256"/>
        <end position="283"/>
    </location>
</feature>
<feature type="zinc finger region" description="C4-type" evidence="1">
    <location>
        <begin position="744"/>
        <end position="770"/>
    </location>
</feature>
<feature type="binding site" evidence="1">
    <location>
        <begin position="34"/>
        <end position="41"/>
    </location>
    <ligand>
        <name>ATP</name>
        <dbReference type="ChEBI" id="CHEBI:30616"/>
        <label>1</label>
    </ligand>
</feature>
<feature type="binding site" evidence="1">
    <location>
        <begin position="643"/>
        <end position="650"/>
    </location>
    <ligand>
        <name>ATP</name>
        <dbReference type="ChEBI" id="CHEBI:30616"/>
        <label>2</label>
    </ligand>
</feature>
<sequence>MSKVDFLHIKGARENNLKNVELTIPKNKLVIFTGLSGSGKSSLAFNTIYEEGRRRYVDSLSSYARQFLGGTSKPDVDSIEGLSPAISIEQKTTHNNPRSTVGTVTEIYDYLRLLYARIGKPFCPKHKIKIEGKTTKLIIEGIVDFPKNSKLIILSPVVELEKGTHQKLIAKLKTEGFLRLKINNEIVSLSDDKEINLDKNKRHSIDIVVDRIVLNEEKKLEISEAISIALEYGKGIVKVENVETGEIKIFSSNHSCPKGDFEMPKIETRLFSFNSPYGMCQNCKGLGVQLRGDYNLLVPDQNLSISEGAIKIFESTVNSSNQEWQEFEALLNYYGIDKNIPMRKLSESDRQIIKYGSKEEIDYIIKSQSNKFKRTKRIEGIIDKVERKYLETSSEGIRTWIKRYMSEFICNMCKGSRLNEHALAVKINGLNIWEISSLSINDVYEQSINLNLSDYEREITTLLISELTSRLSFLVDVGLDYLTLNRMAESLSGGEAQRIRLATQIGSNLTGVLYVLDEPSIGLHQKDNERLIKTLRKMVEIGNTLIVVEHDEDTMRASDFIVDIGPKAGSHGGEIVALGSVEDIIKNPISITGKYLSGEWQNATPKSRRSGSGNVIKITGASQNNIKKLDFKIPLGKFIGVTGVSGSGKSTLINQVLVNAIEKGIARDFSHDKNKNYEKIEGLLYIDKLIKISQSPIGRTPRSNPATYSSLFDDIREIFSNVPEAKARGYQKGRFSFNVPGGRCEKCSGDGSIKIEMFFLPNVYITCDHCDGKRYNEETLQIKYRSKSISDVLDMTVSDALAFFENRLIVKNKLQTLEDVGLGYIKLGQSSTTLSGGEAQRVKLASHLLKKSTGKTLYVLDEPTTGLHSHDVSLLLKVLNRLVDKGDTVIVIEHNLDVIKNCDYLIDLGPGGGVNGGKIIATGTPEQVAQIEKSYTGEFLKRVL</sequence>
<reference key="1">
    <citation type="journal article" date="2001" name="Nucleic Acids Res.">
        <title>The complete genome sequence of the murine respiratory pathogen Mycoplasma pulmonis.</title>
        <authorList>
            <person name="Chambaud I."/>
            <person name="Heilig R."/>
            <person name="Ferris S."/>
            <person name="Barbe V."/>
            <person name="Samson D."/>
            <person name="Galisson F."/>
            <person name="Moszer I."/>
            <person name="Dybvig K."/>
            <person name="Wroblewski H."/>
            <person name="Viari A."/>
            <person name="Rocha E.P.C."/>
            <person name="Blanchard A."/>
        </authorList>
    </citation>
    <scope>NUCLEOTIDE SEQUENCE [LARGE SCALE GENOMIC DNA]</scope>
    <source>
        <strain>UAB CTIP</strain>
    </source>
</reference>
<accession>Q98PL2</accession>
<dbReference type="EMBL" id="AL445565">
    <property type="protein sequence ID" value="CAC13883.1"/>
    <property type="molecule type" value="Genomic_DNA"/>
</dbReference>
<dbReference type="PIR" id="F90600">
    <property type="entry name" value="F90600"/>
</dbReference>
<dbReference type="RefSeq" id="WP_010925511.1">
    <property type="nucleotide sequence ID" value="NC_002771.1"/>
</dbReference>
<dbReference type="SMR" id="Q98PL2"/>
<dbReference type="STRING" id="272635.gene:17577321"/>
<dbReference type="KEGG" id="mpu:MYPU_7100"/>
<dbReference type="eggNOG" id="COG0178">
    <property type="taxonomic scope" value="Bacteria"/>
</dbReference>
<dbReference type="HOGENOM" id="CLU_001370_0_2_14"/>
<dbReference type="BioCyc" id="MPUL272635:G1GT6-723-MONOMER"/>
<dbReference type="Proteomes" id="UP000000528">
    <property type="component" value="Chromosome"/>
</dbReference>
<dbReference type="GO" id="GO:0005737">
    <property type="term" value="C:cytoplasm"/>
    <property type="evidence" value="ECO:0007669"/>
    <property type="project" value="UniProtKB-SubCell"/>
</dbReference>
<dbReference type="GO" id="GO:0009380">
    <property type="term" value="C:excinuclease repair complex"/>
    <property type="evidence" value="ECO:0007669"/>
    <property type="project" value="InterPro"/>
</dbReference>
<dbReference type="GO" id="GO:0005524">
    <property type="term" value="F:ATP binding"/>
    <property type="evidence" value="ECO:0007669"/>
    <property type="project" value="UniProtKB-UniRule"/>
</dbReference>
<dbReference type="GO" id="GO:0016887">
    <property type="term" value="F:ATP hydrolysis activity"/>
    <property type="evidence" value="ECO:0007669"/>
    <property type="project" value="InterPro"/>
</dbReference>
<dbReference type="GO" id="GO:0003677">
    <property type="term" value="F:DNA binding"/>
    <property type="evidence" value="ECO:0007669"/>
    <property type="project" value="UniProtKB-UniRule"/>
</dbReference>
<dbReference type="GO" id="GO:0009381">
    <property type="term" value="F:excinuclease ABC activity"/>
    <property type="evidence" value="ECO:0007669"/>
    <property type="project" value="UniProtKB-UniRule"/>
</dbReference>
<dbReference type="GO" id="GO:0008270">
    <property type="term" value="F:zinc ion binding"/>
    <property type="evidence" value="ECO:0007669"/>
    <property type="project" value="UniProtKB-UniRule"/>
</dbReference>
<dbReference type="GO" id="GO:0006289">
    <property type="term" value="P:nucleotide-excision repair"/>
    <property type="evidence" value="ECO:0007669"/>
    <property type="project" value="UniProtKB-UniRule"/>
</dbReference>
<dbReference type="GO" id="GO:0009432">
    <property type="term" value="P:SOS response"/>
    <property type="evidence" value="ECO:0007669"/>
    <property type="project" value="UniProtKB-UniRule"/>
</dbReference>
<dbReference type="CDD" id="cd03271">
    <property type="entry name" value="ABC_UvrA_II"/>
    <property type="match status" value="1"/>
</dbReference>
<dbReference type="FunFam" id="1.20.1580.10:FF:000002">
    <property type="entry name" value="UvrABC system protein A"/>
    <property type="match status" value="1"/>
</dbReference>
<dbReference type="Gene3D" id="1.10.8.280">
    <property type="entry name" value="ABC transporter ATPase domain-like"/>
    <property type="match status" value="1"/>
</dbReference>
<dbReference type="Gene3D" id="1.20.1580.10">
    <property type="entry name" value="ABC transporter ATPase like domain"/>
    <property type="match status" value="2"/>
</dbReference>
<dbReference type="Gene3D" id="3.30.1490.20">
    <property type="entry name" value="ATP-grasp fold, A domain"/>
    <property type="match status" value="1"/>
</dbReference>
<dbReference type="Gene3D" id="3.40.50.300">
    <property type="entry name" value="P-loop containing nucleotide triphosphate hydrolases"/>
    <property type="match status" value="2"/>
</dbReference>
<dbReference type="HAMAP" id="MF_00205">
    <property type="entry name" value="UvrA"/>
    <property type="match status" value="1"/>
</dbReference>
<dbReference type="InterPro" id="IPR003593">
    <property type="entry name" value="AAA+_ATPase"/>
</dbReference>
<dbReference type="InterPro" id="IPR003439">
    <property type="entry name" value="ABC_transporter-like_ATP-bd"/>
</dbReference>
<dbReference type="InterPro" id="IPR017871">
    <property type="entry name" value="ABC_transporter-like_CS"/>
</dbReference>
<dbReference type="InterPro" id="IPR013815">
    <property type="entry name" value="ATP_grasp_subdomain_1"/>
</dbReference>
<dbReference type="InterPro" id="IPR027417">
    <property type="entry name" value="P-loop_NTPase"/>
</dbReference>
<dbReference type="InterPro" id="IPR004602">
    <property type="entry name" value="UvrA"/>
</dbReference>
<dbReference type="InterPro" id="IPR041552">
    <property type="entry name" value="UvrA_DNA-bd"/>
</dbReference>
<dbReference type="InterPro" id="IPR041102">
    <property type="entry name" value="UvrA_inter"/>
</dbReference>
<dbReference type="NCBIfam" id="NF001503">
    <property type="entry name" value="PRK00349.1"/>
    <property type="match status" value="1"/>
</dbReference>
<dbReference type="NCBIfam" id="TIGR00630">
    <property type="entry name" value="uvra"/>
    <property type="match status" value="1"/>
</dbReference>
<dbReference type="PANTHER" id="PTHR43152">
    <property type="entry name" value="UVRABC SYSTEM PROTEIN A"/>
    <property type="match status" value="1"/>
</dbReference>
<dbReference type="PANTHER" id="PTHR43152:SF3">
    <property type="entry name" value="UVRABC SYSTEM PROTEIN A"/>
    <property type="match status" value="1"/>
</dbReference>
<dbReference type="Pfam" id="PF17755">
    <property type="entry name" value="UvrA_DNA-bind"/>
    <property type="match status" value="1"/>
</dbReference>
<dbReference type="Pfam" id="PF17760">
    <property type="entry name" value="UvrA_inter"/>
    <property type="match status" value="1"/>
</dbReference>
<dbReference type="SMART" id="SM00382">
    <property type="entry name" value="AAA"/>
    <property type="match status" value="2"/>
</dbReference>
<dbReference type="SUPFAM" id="SSF52540">
    <property type="entry name" value="P-loop containing nucleoside triphosphate hydrolases"/>
    <property type="match status" value="2"/>
</dbReference>
<dbReference type="PROSITE" id="PS00211">
    <property type="entry name" value="ABC_TRANSPORTER_1"/>
    <property type="match status" value="1"/>
</dbReference>
<dbReference type="PROSITE" id="PS50893">
    <property type="entry name" value="ABC_TRANSPORTER_2"/>
    <property type="match status" value="1"/>
</dbReference>
<keyword id="KW-0067">ATP-binding</keyword>
<keyword id="KW-0963">Cytoplasm</keyword>
<keyword id="KW-0227">DNA damage</keyword>
<keyword id="KW-0228">DNA excision</keyword>
<keyword id="KW-0234">DNA repair</keyword>
<keyword id="KW-0238">DNA-binding</keyword>
<keyword id="KW-0267">Excision nuclease</keyword>
<keyword id="KW-0479">Metal-binding</keyword>
<keyword id="KW-0547">Nucleotide-binding</keyword>
<keyword id="KW-1185">Reference proteome</keyword>
<keyword id="KW-0677">Repeat</keyword>
<keyword id="KW-0742">SOS response</keyword>
<keyword id="KW-0862">Zinc</keyword>
<keyword id="KW-0863">Zinc-finger</keyword>
<organism>
    <name type="scientific">Mycoplasmopsis pulmonis (strain UAB CTIP)</name>
    <name type="common">Mycoplasma pulmonis</name>
    <dbReference type="NCBI Taxonomy" id="272635"/>
    <lineage>
        <taxon>Bacteria</taxon>
        <taxon>Bacillati</taxon>
        <taxon>Mycoplasmatota</taxon>
        <taxon>Mycoplasmoidales</taxon>
        <taxon>Metamycoplasmataceae</taxon>
        <taxon>Mycoplasmopsis</taxon>
    </lineage>
</organism>